<keyword id="KW-1185">Reference proteome</keyword>
<keyword id="KW-0687">Ribonucleoprotein</keyword>
<keyword id="KW-0689">Ribosomal protein</keyword>
<evidence type="ECO:0000255" key="1">
    <source>
        <dbReference type="HAMAP-Rule" id="MF_00373"/>
    </source>
</evidence>
<evidence type="ECO:0000305" key="2"/>
<comment type="similarity">
    <text evidence="1">Belongs to the bacterial ribosomal protein bL28 family.</text>
</comment>
<proteinExistence type="inferred from homology"/>
<accession>Q89XZ3</accession>
<dbReference type="EMBL" id="BA000040">
    <property type="protein sequence ID" value="BAC45427.1"/>
    <property type="molecule type" value="Genomic_DNA"/>
</dbReference>
<dbReference type="RefSeq" id="NP_766802.1">
    <property type="nucleotide sequence ID" value="NC_004463.1"/>
</dbReference>
<dbReference type="RefSeq" id="WP_011082994.1">
    <property type="nucleotide sequence ID" value="NC_004463.1"/>
</dbReference>
<dbReference type="SMR" id="Q89XZ3"/>
<dbReference type="FunCoup" id="Q89XZ3">
    <property type="interactions" value="582"/>
</dbReference>
<dbReference type="STRING" id="224911.AAV28_40065"/>
<dbReference type="EnsemblBacteria" id="BAC45427">
    <property type="protein sequence ID" value="BAC45427"/>
    <property type="gene ID" value="BAC45427"/>
</dbReference>
<dbReference type="GeneID" id="46495318"/>
<dbReference type="KEGG" id="bja:blr0162"/>
<dbReference type="PATRIC" id="fig|224911.44.peg.8678"/>
<dbReference type="eggNOG" id="COG0227">
    <property type="taxonomic scope" value="Bacteria"/>
</dbReference>
<dbReference type="HOGENOM" id="CLU_064548_4_2_5"/>
<dbReference type="InParanoid" id="Q89XZ3"/>
<dbReference type="OrthoDB" id="9805609at2"/>
<dbReference type="PhylomeDB" id="Q89XZ3"/>
<dbReference type="Proteomes" id="UP000002526">
    <property type="component" value="Chromosome"/>
</dbReference>
<dbReference type="GO" id="GO:0022625">
    <property type="term" value="C:cytosolic large ribosomal subunit"/>
    <property type="evidence" value="ECO:0000318"/>
    <property type="project" value="GO_Central"/>
</dbReference>
<dbReference type="GO" id="GO:0003735">
    <property type="term" value="F:structural constituent of ribosome"/>
    <property type="evidence" value="ECO:0000318"/>
    <property type="project" value="GO_Central"/>
</dbReference>
<dbReference type="GO" id="GO:0006412">
    <property type="term" value="P:translation"/>
    <property type="evidence" value="ECO:0007669"/>
    <property type="project" value="UniProtKB-UniRule"/>
</dbReference>
<dbReference type="Gene3D" id="2.30.170.40">
    <property type="entry name" value="Ribosomal protein L28/L24"/>
    <property type="match status" value="1"/>
</dbReference>
<dbReference type="HAMAP" id="MF_00373">
    <property type="entry name" value="Ribosomal_bL28"/>
    <property type="match status" value="1"/>
</dbReference>
<dbReference type="InterPro" id="IPR026569">
    <property type="entry name" value="Ribosomal_bL28"/>
</dbReference>
<dbReference type="InterPro" id="IPR034704">
    <property type="entry name" value="Ribosomal_bL28/bL31-like_sf"/>
</dbReference>
<dbReference type="InterPro" id="IPR001383">
    <property type="entry name" value="Ribosomal_bL28_bact-type"/>
</dbReference>
<dbReference type="InterPro" id="IPR037147">
    <property type="entry name" value="Ribosomal_bL28_sf"/>
</dbReference>
<dbReference type="NCBIfam" id="TIGR00009">
    <property type="entry name" value="L28"/>
    <property type="match status" value="1"/>
</dbReference>
<dbReference type="PANTHER" id="PTHR13528">
    <property type="entry name" value="39S RIBOSOMAL PROTEIN L28, MITOCHONDRIAL"/>
    <property type="match status" value="1"/>
</dbReference>
<dbReference type="PANTHER" id="PTHR13528:SF2">
    <property type="entry name" value="LARGE RIBOSOMAL SUBUNIT PROTEIN BL28M"/>
    <property type="match status" value="1"/>
</dbReference>
<dbReference type="Pfam" id="PF00830">
    <property type="entry name" value="Ribosomal_L28"/>
    <property type="match status" value="1"/>
</dbReference>
<dbReference type="SUPFAM" id="SSF143800">
    <property type="entry name" value="L28p-like"/>
    <property type="match status" value="1"/>
</dbReference>
<name>RL28_BRADU</name>
<protein>
    <recommendedName>
        <fullName evidence="1">Large ribosomal subunit protein bL28</fullName>
    </recommendedName>
    <alternativeName>
        <fullName evidence="2">50S ribosomal protein L28</fullName>
    </alternativeName>
</protein>
<sequence length="102" mass="11128">MSRRCELTAKGPLVGHKVSHSNIKTKRRFLPNLVNVTFISEALERNVRLRVSTNAVKSVDHNGGLDAFLLKASADALSPRALELKRAIQKKVGVTAPVKKAS</sequence>
<feature type="chain" id="PRO_0000178441" description="Large ribosomal subunit protein bL28">
    <location>
        <begin position="1"/>
        <end position="102"/>
    </location>
</feature>
<gene>
    <name evidence="1" type="primary">rpmB</name>
    <name type="ordered locus">blr0162</name>
</gene>
<organism>
    <name type="scientific">Bradyrhizobium diazoefficiens (strain JCM 10833 / BCRC 13528 / IAM 13628 / NBRC 14792 / USDA 110)</name>
    <dbReference type="NCBI Taxonomy" id="224911"/>
    <lineage>
        <taxon>Bacteria</taxon>
        <taxon>Pseudomonadati</taxon>
        <taxon>Pseudomonadota</taxon>
        <taxon>Alphaproteobacteria</taxon>
        <taxon>Hyphomicrobiales</taxon>
        <taxon>Nitrobacteraceae</taxon>
        <taxon>Bradyrhizobium</taxon>
    </lineage>
</organism>
<reference key="1">
    <citation type="journal article" date="2002" name="DNA Res.">
        <title>Complete genomic sequence of nitrogen-fixing symbiotic bacterium Bradyrhizobium japonicum USDA110.</title>
        <authorList>
            <person name="Kaneko T."/>
            <person name="Nakamura Y."/>
            <person name="Sato S."/>
            <person name="Minamisawa K."/>
            <person name="Uchiumi T."/>
            <person name="Sasamoto S."/>
            <person name="Watanabe A."/>
            <person name="Idesawa K."/>
            <person name="Iriguchi M."/>
            <person name="Kawashima K."/>
            <person name="Kohara M."/>
            <person name="Matsumoto M."/>
            <person name="Shimpo S."/>
            <person name="Tsuruoka H."/>
            <person name="Wada T."/>
            <person name="Yamada M."/>
            <person name="Tabata S."/>
        </authorList>
    </citation>
    <scope>NUCLEOTIDE SEQUENCE [LARGE SCALE GENOMIC DNA]</scope>
    <source>
        <strain>JCM 10833 / BCRC 13528 / IAM 13628 / NBRC 14792 / USDA 110</strain>
    </source>
</reference>